<proteinExistence type="inferred from homology"/>
<gene>
    <name evidence="5" type="ORF">orf1</name>
</gene>
<reference key="1">
    <citation type="journal article" date="2019" name="MSphere">
        <title>Identification of a polyketide synthase gene responsible for ascochitine biosynthesis in Ascochyta fabae and its abrogation in sister taxa.</title>
        <authorList>
            <person name="Kim W."/>
            <person name="Lichtenzveig J."/>
            <person name="Syme R.A."/>
            <person name="Williams A.H."/>
            <person name="Peever T.L."/>
            <person name="Chen W."/>
        </authorList>
    </citation>
    <scope>NUCLEOTIDE SEQUENCE [GENOMIC DNA]</scope>
    <scope>FUNCTION</scope>
    <source>
        <strain>AF247/15</strain>
    </source>
</reference>
<organism>
    <name type="scientific">Didymella fabae</name>
    <name type="common">Leaf and pod spot disease fungus</name>
    <name type="synonym">Ascochyta fabae</name>
    <dbReference type="NCBI Taxonomy" id="372025"/>
    <lineage>
        <taxon>Eukaryota</taxon>
        <taxon>Fungi</taxon>
        <taxon>Dikarya</taxon>
        <taxon>Ascomycota</taxon>
        <taxon>Pezizomycotina</taxon>
        <taxon>Dothideomycetes</taxon>
        <taxon>Pleosporomycetidae</taxon>
        <taxon>Pleosporales</taxon>
        <taxon>Pleosporineae</taxon>
        <taxon>Didymellaceae</taxon>
        <taxon>Ascochyta</taxon>
    </lineage>
</organism>
<name>ASC1_DIDFA</name>
<keyword id="KW-0520">NAD</keyword>
<keyword id="KW-0560">Oxidoreductase</keyword>
<keyword id="KW-0843">Virulence</keyword>
<accession>A0A5C1REZ4</accession>
<protein>
    <recommendedName>
        <fullName evidence="5">Aldehyde dehydrogenase</fullName>
        <ecNumber evidence="2">1.2.1.3</ecNumber>
    </recommendedName>
    <alternativeName>
        <fullName evidence="5">Ascochitine biosynthesis cluster protein 1</fullName>
    </alternativeName>
</protein>
<feature type="chain" id="PRO_0000448982" description="Aldehyde dehydrogenase">
    <location>
        <begin position="1"/>
        <end position="494"/>
    </location>
</feature>
<feature type="active site" evidence="2">
    <location>
        <position position="245"/>
    </location>
</feature>
<feature type="active site" evidence="3">
    <location>
        <position position="279"/>
    </location>
</feature>
<feature type="binding site" evidence="1">
    <location>
        <begin position="223"/>
        <end position="228"/>
    </location>
    <ligand>
        <name>NAD(+)</name>
        <dbReference type="ChEBI" id="CHEBI:57540"/>
    </ligand>
</feature>
<comment type="function">
    <text evidence="4 7">Aldehyde dehydrogenase; part of the gene cluster that mediates the biosynthesis of the selective antifungal agent ascochitine, an o-quinone methide that plays a possible protective role against other microbial competitors in nature and is considered to be important for pathogenicity of legume-associated Didymella species (PubMed:31554725). The pathway probably begins with the synthesis of a keto-aldehyde intermediate by the ascochitine non-reducing polyketide synthase pksAC from successive condensations of 4 malonyl-CoA units, presumably with a simple acetyl-CoA starter unit (Probable). Release of the keto-aldehyde intermediate is consistent with the presence of the C-terminal reductive release domain (Probable). The HR-PKS (orf7) probably makes a diketide starter unit which is passed to the non-reducing polyketide synthase pksAC for further extension, producing ascochital and ascochitine (Probable). The aldehyde dehydrogenase (orf1), the 2-oxoglutarate-dependent dioxygenase (orf3) and the dehydrogenase (orf9) are probably involved in subsequent oxidations of methyl groups to the carboxylic acid of the heterocyclic ring (Probable). The ascochitine gene cluster also includes a gene encoding a short peptide with a cupin domain (orf2) that is often found in secondary metabolite gene clusters and which function has still to be determined (Probable).</text>
</comment>
<comment type="catalytic activity">
    <reaction evidence="2">
        <text>an aldehyde + NAD(+) + H2O = a carboxylate + NADH + 2 H(+)</text>
        <dbReference type="Rhea" id="RHEA:16185"/>
        <dbReference type="ChEBI" id="CHEBI:15377"/>
        <dbReference type="ChEBI" id="CHEBI:15378"/>
        <dbReference type="ChEBI" id="CHEBI:17478"/>
        <dbReference type="ChEBI" id="CHEBI:29067"/>
        <dbReference type="ChEBI" id="CHEBI:57540"/>
        <dbReference type="ChEBI" id="CHEBI:57945"/>
        <dbReference type="EC" id="1.2.1.3"/>
    </reaction>
</comment>
<comment type="pathway">
    <text evidence="7">Mycotoxin biosynthesis.</text>
</comment>
<comment type="similarity">
    <text evidence="6">Belongs to the aldehyde dehydrogenase family.</text>
</comment>
<evidence type="ECO:0000250" key="1">
    <source>
        <dbReference type="UniProtKB" id="Q28399"/>
    </source>
</evidence>
<evidence type="ECO:0000255" key="2">
    <source>
        <dbReference type="PROSITE-ProRule" id="PRU10007"/>
    </source>
</evidence>
<evidence type="ECO:0000255" key="3">
    <source>
        <dbReference type="PROSITE-ProRule" id="PRU10008"/>
    </source>
</evidence>
<evidence type="ECO:0000269" key="4">
    <source>
    </source>
</evidence>
<evidence type="ECO:0000303" key="5">
    <source>
    </source>
</evidence>
<evidence type="ECO:0000305" key="6"/>
<evidence type="ECO:0000305" key="7">
    <source>
    </source>
</evidence>
<dbReference type="EC" id="1.2.1.3" evidence="2"/>
<dbReference type="EMBL" id="MN052622">
    <property type="protein sequence ID" value="QEN17969.1"/>
    <property type="molecule type" value="Genomic_DNA"/>
</dbReference>
<dbReference type="SMR" id="A0A5C1REZ4"/>
<dbReference type="GO" id="GO:0004029">
    <property type="term" value="F:aldehyde dehydrogenase (NAD+) activity"/>
    <property type="evidence" value="ECO:0007669"/>
    <property type="project" value="UniProtKB-EC"/>
</dbReference>
<dbReference type="FunFam" id="3.40.309.10:FF:000012">
    <property type="entry name" value="Betaine aldehyde dehydrogenase"/>
    <property type="match status" value="1"/>
</dbReference>
<dbReference type="FunFam" id="3.40.605.10:FF:000007">
    <property type="entry name" value="NAD/NADP-dependent betaine aldehyde dehydrogenase"/>
    <property type="match status" value="1"/>
</dbReference>
<dbReference type="Gene3D" id="3.40.605.10">
    <property type="entry name" value="Aldehyde Dehydrogenase, Chain A, domain 1"/>
    <property type="match status" value="1"/>
</dbReference>
<dbReference type="Gene3D" id="3.40.309.10">
    <property type="entry name" value="Aldehyde Dehydrogenase, Chain A, domain 2"/>
    <property type="match status" value="1"/>
</dbReference>
<dbReference type="InterPro" id="IPR016161">
    <property type="entry name" value="Ald_DH/histidinol_DH"/>
</dbReference>
<dbReference type="InterPro" id="IPR016163">
    <property type="entry name" value="Ald_DH_C"/>
</dbReference>
<dbReference type="InterPro" id="IPR016160">
    <property type="entry name" value="Ald_DH_CS_CYS"/>
</dbReference>
<dbReference type="InterPro" id="IPR029510">
    <property type="entry name" value="Ald_DH_CS_GLU"/>
</dbReference>
<dbReference type="InterPro" id="IPR016162">
    <property type="entry name" value="Ald_DH_N"/>
</dbReference>
<dbReference type="InterPro" id="IPR015590">
    <property type="entry name" value="Aldehyde_DH_dom"/>
</dbReference>
<dbReference type="PANTHER" id="PTHR11699">
    <property type="entry name" value="ALDEHYDE DEHYDROGENASE-RELATED"/>
    <property type="match status" value="1"/>
</dbReference>
<dbReference type="Pfam" id="PF00171">
    <property type="entry name" value="Aldedh"/>
    <property type="match status" value="1"/>
</dbReference>
<dbReference type="SUPFAM" id="SSF53720">
    <property type="entry name" value="ALDH-like"/>
    <property type="match status" value="1"/>
</dbReference>
<dbReference type="PROSITE" id="PS00070">
    <property type="entry name" value="ALDEHYDE_DEHYDR_CYS"/>
    <property type="match status" value="1"/>
</dbReference>
<dbReference type="PROSITE" id="PS00687">
    <property type="entry name" value="ALDEHYDE_DEHYDR_GLU"/>
    <property type="match status" value="1"/>
</dbReference>
<sequence>MSASKHIICEYSSEDPSKDFEVHNPATGAVIAIVRAGDATTLDKAVQVAHKAFLEWKKVPLTRRSQLMFKCAEEVEKHAEELAELLTTENGKLLSDGRMVDVNFVSQVYRYFGSLIDKLPGEFHDSGSVYRYVTREPHGVCGGILPFNWPPIHTAGKSAPCIAMGNTIIIKPGEQAPLTSMRIVDILNTVLPKGVVQYVPGVGPEVPQALTAHPLVKMVSITGSTTAGKAVVMAASALVKPTVLELGGKNALVVFPDADLHRAARDALEGAFFNKGEACTATSRLLIHNDIYDAFIEKYAAAVCKLQAGNGLKKGTHVGPCVTQAQKERVLDFIRIGEEEGATIAAQGRLPDDAEEKDGFFVAPTLFTNVKHSMRIAQEEIFGPVVTACKFDSEEEAVSIINGARWGLTCAIYSGNQELALRMCRQVDVGMTFINNYFRNTLGIPFGGVKETGYGREHCIDTLKDWSTSKVIQMPSGLAPVPSWPPVNELLPWQ</sequence>